<proteinExistence type="inferred from homology"/>
<sequence length="157" mass="17814">MEEKNKIYLTQETIKKYEEEKWHLINVERPAVILEIKEARQQGDLSENAEYDAAREKQGQIEDRITELENILSNAISIQESHSDKIGLGSVVRILNQSTGKERTFKIVGSFDTDPTQNKISYESPLAKSIIGFSKGDVVEIDAPDKYTTKILSVNDK</sequence>
<organism>
    <name type="scientific">Mycoplasmopsis pulmonis (strain UAB CTIP)</name>
    <name type="common">Mycoplasma pulmonis</name>
    <dbReference type="NCBI Taxonomy" id="272635"/>
    <lineage>
        <taxon>Bacteria</taxon>
        <taxon>Bacillati</taxon>
        <taxon>Mycoplasmatota</taxon>
        <taxon>Mycoplasmoidales</taxon>
        <taxon>Metamycoplasmataceae</taxon>
        <taxon>Mycoplasmopsis</taxon>
    </lineage>
</organism>
<name>GREA_MYCPU</name>
<protein>
    <recommendedName>
        <fullName evidence="1">Transcription elongation factor GreA</fullName>
    </recommendedName>
    <alternativeName>
        <fullName evidence="1">Transcript cleavage factor GreA</fullName>
    </alternativeName>
</protein>
<evidence type="ECO:0000255" key="1">
    <source>
        <dbReference type="HAMAP-Rule" id="MF_00105"/>
    </source>
</evidence>
<evidence type="ECO:0000305" key="2"/>
<reference key="1">
    <citation type="journal article" date="2001" name="Nucleic Acids Res.">
        <title>The complete genome sequence of the murine respiratory pathogen Mycoplasma pulmonis.</title>
        <authorList>
            <person name="Chambaud I."/>
            <person name="Heilig R."/>
            <person name="Ferris S."/>
            <person name="Barbe V."/>
            <person name="Samson D."/>
            <person name="Galisson F."/>
            <person name="Moszer I."/>
            <person name="Dybvig K."/>
            <person name="Wroblewski H."/>
            <person name="Viari A."/>
            <person name="Rocha E.P.C."/>
            <person name="Blanchard A."/>
        </authorList>
    </citation>
    <scope>NUCLEOTIDE SEQUENCE [LARGE SCALE GENOMIC DNA]</scope>
    <source>
        <strain>UAB CTIP</strain>
    </source>
</reference>
<dbReference type="EMBL" id="AL445565">
    <property type="protein sequence ID" value="CAC13726.1"/>
    <property type="status" value="ALT_INIT"/>
    <property type="molecule type" value="Genomic_DNA"/>
</dbReference>
<dbReference type="PIR" id="A99581">
    <property type="entry name" value="A99581"/>
</dbReference>
<dbReference type="RefSeq" id="WP_041364168.1">
    <property type="nucleotide sequence ID" value="NC_002771.1"/>
</dbReference>
<dbReference type="SMR" id="Q98Q16"/>
<dbReference type="STRING" id="272635.gene:17577160"/>
<dbReference type="KEGG" id="mpu:MYPU_5530"/>
<dbReference type="eggNOG" id="COG0782">
    <property type="taxonomic scope" value="Bacteria"/>
</dbReference>
<dbReference type="HOGENOM" id="CLU_101379_2_1_14"/>
<dbReference type="BioCyc" id="MPUL272635:G1GT6-566-MONOMER"/>
<dbReference type="Proteomes" id="UP000000528">
    <property type="component" value="Chromosome"/>
</dbReference>
<dbReference type="GO" id="GO:0003677">
    <property type="term" value="F:DNA binding"/>
    <property type="evidence" value="ECO:0007669"/>
    <property type="project" value="UniProtKB-UniRule"/>
</dbReference>
<dbReference type="GO" id="GO:0070063">
    <property type="term" value="F:RNA polymerase binding"/>
    <property type="evidence" value="ECO:0007669"/>
    <property type="project" value="InterPro"/>
</dbReference>
<dbReference type="GO" id="GO:0006354">
    <property type="term" value="P:DNA-templated transcription elongation"/>
    <property type="evidence" value="ECO:0007669"/>
    <property type="project" value="TreeGrafter"/>
</dbReference>
<dbReference type="GO" id="GO:0032784">
    <property type="term" value="P:regulation of DNA-templated transcription elongation"/>
    <property type="evidence" value="ECO:0007669"/>
    <property type="project" value="UniProtKB-UniRule"/>
</dbReference>
<dbReference type="FunFam" id="1.10.287.180:FF:000001">
    <property type="entry name" value="Transcription elongation factor GreA"/>
    <property type="match status" value="1"/>
</dbReference>
<dbReference type="Gene3D" id="3.10.50.30">
    <property type="entry name" value="Transcription elongation factor, GreA/GreB, C-terminal domain"/>
    <property type="match status" value="1"/>
</dbReference>
<dbReference type="Gene3D" id="1.10.287.180">
    <property type="entry name" value="Transcription elongation factor, GreA/GreB, N-terminal domain"/>
    <property type="match status" value="1"/>
</dbReference>
<dbReference type="HAMAP" id="MF_00105">
    <property type="entry name" value="GreA_GreB"/>
    <property type="match status" value="1"/>
</dbReference>
<dbReference type="InterPro" id="IPR036953">
    <property type="entry name" value="GreA/GreB_C_sf"/>
</dbReference>
<dbReference type="InterPro" id="IPR018151">
    <property type="entry name" value="TF_GreA/GreB_CS"/>
</dbReference>
<dbReference type="InterPro" id="IPR006359">
    <property type="entry name" value="Tscrpt_elong_fac_GreA"/>
</dbReference>
<dbReference type="InterPro" id="IPR028624">
    <property type="entry name" value="Tscrpt_elong_fac_GreA/B"/>
</dbReference>
<dbReference type="InterPro" id="IPR001437">
    <property type="entry name" value="Tscrpt_elong_fac_GreA/B_C"/>
</dbReference>
<dbReference type="InterPro" id="IPR023459">
    <property type="entry name" value="Tscrpt_elong_fac_GreA/B_fam"/>
</dbReference>
<dbReference type="InterPro" id="IPR022691">
    <property type="entry name" value="Tscrpt_elong_fac_GreA/B_N"/>
</dbReference>
<dbReference type="InterPro" id="IPR036805">
    <property type="entry name" value="Tscrpt_elong_fac_GreA/B_N_sf"/>
</dbReference>
<dbReference type="NCBIfam" id="TIGR01462">
    <property type="entry name" value="greA"/>
    <property type="match status" value="1"/>
</dbReference>
<dbReference type="NCBIfam" id="NF001263">
    <property type="entry name" value="PRK00226.1-4"/>
    <property type="match status" value="1"/>
</dbReference>
<dbReference type="PANTHER" id="PTHR30437">
    <property type="entry name" value="TRANSCRIPTION ELONGATION FACTOR GREA"/>
    <property type="match status" value="1"/>
</dbReference>
<dbReference type="PANTHER" id="PTHR30437:SF4">
    <property type="entry name" value="TRANSCRIPTION ELONGATION FACTOR GREA"/>
    <property type="match status" value="1"/>
</dbReference>
<dbReference type="Pfam" id="PF01272">
    <property type="entry name" value="GreA_GreB"/>
    <property type="match status" value="1"/>
</dbReference>
<dbReference type="Pfam" id="PF03449">
    <property type="entry name" value="GreA_GreB_N"/>
    <property type="match status" value="1"/>
</dbReference>
<dbReference type="PIRSF" id="PIRSF006092">
    <property type="entry name" value="GreA_GreB"/>
    <property type="match status" value="1"/>
</dbReference>
<dbReference type="SUPFAM" id="SSF54534">
    <property type="entry name" value="FKBP-like"/>
    <property type="match status" value="1"/>
</dbReference>
<dbReference type="SUPFAM" id="SSF46557">
    <property type="entry name" value="GreA transcript cleavage protein, N-terminal domain"/>
    <property type="match status" value="1"/>
</dbReference>
<dbReference type="PROSITE" id="PS00830">
    <property type="entry name" value="GREAB_2"/>
    <property type="match status" value="1"/>
</dbReference>
<comment type="function">
    <text evidence="1">Necessary for efficient RNA polymerase transcription elongation past template-encoded arresting sites. The arresting sites in DNA have the property of trapping a certain fraction of elongating RNA polymerases that pass through, resulting in locked ternary complexes. Cleavage of the nascent transcript by cleavage factors such as GreA or GreB allows the resumption of elongation from the new 3'terminus. GreA releases sequences of 2 to 3 nucleotides.</text>
</comment>
<comment type="similarity">
    <text evidence="1">Belongs to the GreA/GreB family.</text>
</comment>
<comment type="sequence caution" evidence="2">
    <conflict type="erroneous initiation">
        <sequence resource="EMBL-CDS" id="CAC13726"/>
    </conflict>
</comment>
<gene>
    <name evidence="1" type="primary">greA</name>
    <name type="ordered locus">MYPU_5530</name>
</gene>
<feature type="chain" id="PRO_0000176942" description="Transcription elongation factor GreA">
    <location>
        <begin position="1"/>
        <end position="157"/>
    </location>
</feature>
<feature type="coiled-coil region" evidence="1">
    <location>
        <begin position="47"/>
        <end position="75"/>
    </location>
</feature>
<accession>Q98Q16</accession>
<keyword id="KW-0175">Coiled coil</keyword>
<keyword id="KW-0238">DNA-binding</keyword>
<keyword id="KW-1185">Reference proteome</keyword>
<keyword id="KW-0804">Transcription</keyword>
<keyword id="KW-0805">Transcription regulation</keyword>